<evidence type="ECO:0000250" key="1"/>
<evidence type="ECO:0000250" key="2">
    <source>
        <dbReference type="UniProtKB" id="P01106"/>
    </source>
</evidence>
<evidence type="ECO:0000250" key="3">
    <source>
        <dbReference type="UniProtKB" id="P01108"/>
    </source>
</evidence>
<evidence type="ECO:0000255" key="4">
    <source>
        <dbReference type="PROSITE-ProRule" id="PRU00981"/>
    </source>
</evidence>
<evidence type="ECO:0000256" key="5">
    <source>
        <dbReference type="SAM" id="MobiDB-lite"/>
    </source>
</evidence>
<protein>
    <recommendedName>
        <fullName>Myc proto-oncogene protein</fullName>
    </recommendedName>
    <alternativeName>
        <fullName>Proto-oncogene c-Myc</fullName>
    </alternativeName>
    <alternativeName>
        <fullName>Transcription factor p64</fullName>
    </alternativeName>
</protein>
<gene>
    <name type="primary">MYC</name>
</gene>
<keyword id="KW-0007">Acetylation</keyword>
<keyword id="KW-0010">Activator</keyword>
<keyword id="KW-0158">Chromosome</keyword>
<keyword id="KW-0963">Cytoplasm</keyword>
<keyword id="KW-0238">DNA-binding</keyword>
<keyword id="KW-0325">Glycoprotein</keyword>
<keyword id="KW-1017">Isopeptide bond</keyword>
<keyword id="KW-0539">Nucleus</keyword>
<keyword id="KW-0597">Phosphoprotein</keyword>
<keyword id="KW-0656">Proto-oncogene</keyword>
<keyword id="KW-1185">Reference proteome</keyword>
<keyword id="KW-0804">Transcription</keyword>
<keyword id="KW-0805">Transcription regulation</keyword>
<keyword id="KW-0832">Ubl conjugation</keyword>
<feature type="chain" id="PRO_0000127289" description="Myc proto-oncogene protein">
    <location>
        <begin position="1"/>
        <end position="438"/>
    </location>
</feature>
<feature type="domain" description="bHLH" evidence="4">
    <location>
        <begin position="353"/>
        <end position="405"/>
    </location>
</feature>
<feature type="region of interest" description="Disordered" evidence="5">
    <location>
        <begin position="201"/>
        <end position="294"/>
    </location>
</feature>
<feature type="region of interest" description="Disordered" evidence="5">
    <location>
        <begin position="335"/>
        <end position="357"/>
    </location>
</feature>
<feature type="region of interest" description="Leucine-zipper">
    <location>
        <begin position="412"/>
        <end position="433"/>
    </location>
</feature>
<feature type="short sequence motif" description="9aaTAD" evidence="2">
    <location>
        <begin position="100"/>
        <end position="108"/>
    </location>
</feature>
<feature type="short sequence motif" description="UBR5-degron" evidence="2">
    <location>
        <begin position="354"/>
        <end position="363"/>
    </location>
</feature>
<feature type="compositionally biased region" description="Low complexity" evidence="5">
    <location>
        <begin position="210"/>
        <end position="237"/>
    </location>
</feature>
<feature type="compositionally biased region" description="Acidic residues" evidence="5">
    <location>
        <begin position="251"/>
        <end position="262"/>
    </location>
</feature>
<feature type="compositionally biased region" description="Basic and acidic residues" evidence="5">
    <location>
        <begin position="265"/>
        <end position="277"/>
    </location>
</feature>
<feature type="compositionally biased region" description="Low complexity" evidence="5">
    <location>
        <begin position="278"/>
        <end position="287"/>
    </location>
</feature>
<feature type="compositionally biased region" description="Polar residues" evidence="5">
    <location>
        <begin position="335"/>
        <end position="346"/>
    </location>
</feature>
<feature type="modified residue" description="Phosphoserine" evidence="2">
    <location>
        <position position="6"/>
    </location>
</feature>
<feature type="modified residue" description="Phosphothreonine; by GSK3; alternate" evidence="2">
    <location>
        <position position="58"/>
    </location>
</feature>
<feature type="modified residue" description="Phosphoserine; by DYRK2, GSK3 and CDK2" evidence="2">
    <location>
        <position position="62"/>
    </location>
</feature>
<feature type="modified residue" description="Phosphoserine" evidence="2">
    <location>
        <position position="71"/>
    </location>
</feature>
<feature type="modified residue" description="Phosphoserine" evidence="2">
    <location>
        <position position="81"/>
    </location>
</feature>
<feature type="modified residue" description="N6-acetyllysine; by PCAF; alternate" evidence="2">
    <location>
        <position position="143"/>
    </location>
</feature>
<feature type="modified residue" description="N6-acetyllysine; alternate" evidence="2">
    <location>
        <position position="148"/>
    </location>
</feature>
<feature type="modified residue" description="Phosphoserine" evidence="2">
    <location>
        <position position="151"/>
    </location>
</feature>
<feature type="modified residue" description="N6-acetyllysine; by PCAF" evidence="2">
    <location>
        <position position="157"/>
    </location>
</feature>
<feature type="modified residue" description="Phosphoserine" evidence="2">
    <location>
        <position position="159"/>
    </location>
</feature>
<feature type="modified residue" description="Phosphoserine" evidence="2">
    <location>
        <position position="161"/>
    </location>
</feature>
<feature type="modified residue" description="N6-acetyllysine; by PCAF" evidence="2">
    <location>
        <position position="274"/>
    </location>
</feature>
<feature type="modified residue" description="Phosphoserine" evidence="2">
    <location>
        <position position="292"/>
    </location>
</feature>
<feature type="modified residue" description="Phosphoserine" evidence="2">
    <location>
        <position position="313"/>
    </location>
</feature>
<feature type="modified residue" description="Phosphothreonine" evidence="2">
    <location>
        <position position="314"/>
    </location>
</feature>
<feature type="modified residue" description="N6-acetyllysine; by PCAF" evidence="2">
    <location>
        <position position="316"/>
    </location>
</feature>
<feature type="modified residue" description="N6-acetyllysine; by PCAF" evidence="2">
    <location>
        <position position="322"/>
    </location>
</feature>
<feature type="modified residue" description="Phosphoserine; by PIM2; in vitro" evidence="3">
    <location>
        <position position="328"/>
    </location>
</feature>
<feature type="modified residue" description="Phosphoserine" evidence="2">
    <location>
        <position position="343"/>
    </location>
</feature>
<feature type="modified residue" description="Phosphoserine" evidence="2">
    <location>
        <position position="346"/>
    </location>
</feature>
<feature type="modified residue" description="Phosphoserine" evidence="2">
    <location>
        <position position="347"/>
    </location>
</feature>
<feature type="modified residue" description="N6-acetyllysine; by PCAF" evidence="2">
    <location>
        <position position="370"/>
    </location>
</feature>
<feature type="glycosylation site" description="O-linked (GlcNAc) threonine; alternate" evidence="1">
    <location>
        <position position="58"/>
    </location>
</feature>
<feature type="cross-link" description="Glycyl lysine isopeptide (Lys-Gly) (interchain with G-Cter in SUMO2)" evidence="2">
    <location>
        <position position="52"/>
    </location>
</feature>
<feature type="cross-link" description="Glycyl lysine isopeptide (Lys-Gly) (interchain with G-Cter in SUMO2); alternate" evidence="2">
    <location>
        <position position="143"/>
    </location>
</feature>
<feature type="cross-link" description="Glycyl lysine isopeptide (Lys-Gly) (interchain with G-Cter in SUMO2); alternate" evidence="2">
    <location>
        <position position="148"/>
    </location>
</feature>
<feature type="cross-link" description="Glycyl lysine isopeptide (Lys-Gly) (interchain with G-Cter in SUMO2)" evidence="2">
    <location>
        <position position="297"/>
    </location>
</feature>
<accession>P49032</accession>
<sequence>MPLNVSFSNRNYDLDYDSVQPYFYCDEEENFYQQQQQSELQPPAPSEDIWKKFELLPTPPLSPSRRSGLCSTSCVSVTPFSPRGDNDGGGGSFSTADQLEMVTELLGGDMVNQSFICDPDDETFIKNIIIQDCMWSGFSAAAKLVSEKLASYQAARKDSSSPNPARGHSVCSTSSLYLQDLSAAASECIDPSVVFPYPLNDSSSPKPCASPDSSAFSTSSDSLLSSTESSPRASPEPLVLHEETPPTTSSDSEEEQEDEEIDVVSVEKRQPPGKRSESGSPSSGGHSKPPHSPLVLKRCHVSTHQHNYAAPPSTRKDYPAAKRVKLDSVRVLRQISNNRKCTSPRSSDTEENDKRRTHNVLERQRRNELKRSFFALRDQIPELENNEKAPKVVILKKATTYILSVQAEEQKLISEKDLLRKRREQLKHKLEQLRNSCA</sequence>
<name>MYC_CALJA</name>
<dbReference type="EMBL" id="M88116">
    <property type="protein sequence ID" value="AAA35401.1"/>
    <property type="molecule type" value="Genomic_DNA"/>
</dbReference>
<dbReference type="PIR" id="JC1179">
    <property type="entry name" value="JC1179"/>
</dbReference>
<dbReference type="RefSeq" id="XP_008981519.1">
    <property type="nucleotide sequence ID" value="XM_008983271.4"/>
</dbReference>
<dbReference type="RefSeq" id="XP_035132699.1">
    <property type="nucleotide sequence ID" value="XM_035276808.2"/>
</dbReference>
<dbReference type="RefSeq" id="XP_054102691.1">
    <property type="nucleotide sequence ID" value="XM_054246716.1"/>
</dbReference>
<dbReference type="SMR" id="P49032"/>
<dbReference type="FunCoup" id="P49032">
    <property type="interactions" value="3828"/>
</dbReference>
<dbReference type="STRING" id="9483.ENSCJAP00000023101"/>
<dbReference type="GlyCosmos" id="P49032">
    <property type="glycosylation" value="1 site, No reported glycans"/>
</dbReference>
<dbReference type="GeneID" id="100407754"/>
<dbReference type="KEGG" id="cjc:100407754"/>
<dbReference type="CTD" id="4609"/>
<dbReference type="eggNOG" id="KOG2483">
    <property type="taxonomic scope" value="Eukaryota"/>
</dbReference>
<dbReference type="InParanoid" id="P49032"/>
<dbReference type="OrthoDB" id="5964374at2759"/>
<dbReference type="Proteomes" id="UP000008225">
    <property type="component" value="Unplaced"/>
</dbReference>
<dbReference type="Bgee" id="ENSCJAG00000012620">
    <property type="expression patterns" value="Expressed in liver and 6 other cell types or tissues"/>
</dbReference>
<dbReference type="GO" id="GO:0005737">
    <property type="term" value="C:cytoplasm"/>
    <property type="evidence" value="ECO:0007669"/>
    <property type="project" value="UniProtKB-SubCell"/>
</dbReference>
<dbReference type="GO" id="GO:0005730">
    <property type="term" value="C:nucleolus"/>
    <property type="evidence" value="ECO:0000250"/>
    <property type="project" value="UniProtKB"/>
</dbReference>
<dbReference type="GO" id="GO:0005654">
    <property type="term" value="C:nucleoplasm"/>
    <property type="evidence" value="ECO:0000250"/>
    <property type="project" value="UniProtKB"/>
</dbReference>
<dbReference type="GO" id="GO:0005634">
    <property type="term" value="C:nucleus"/>
    <property type="evidence" value="ECO:0000250"/>
    <property type="project" value="UniProtKB"/>
</dbReference>
<dbReference type="GO" id="GO:0003677">
    <property type="term" value="F:DNA binding"/>
    <property type="evidence" value="ECO:0000250"/>
    <property type="project" value="UniProtKB"/>
</dbReference>
<dbReference type="GO" id="GO:0000981">
    <property type="term" value="F:DNA-binding transcription factor activity, RNA polymerase II-specific"/>
    <property type="evidence" value="ECO:0000250"/>
    <property type="project" value="UniProtKB"/>
</dbReference>
<dbReference type="GO" id="GO:0070888">
    <property type="term" value="F:E-box binding"/>
    <property type="evidence" value="ECO:0000250"/>
    <property type="project" value="UniProtKB"/>
</dbReference>
<dbReference type="GO" id="GO:0046983">
    <property type="term" value="F:protein dimerization activity"/>
    <property type="evidence" value="ECO:0007669"/>
    <property type="project" value="InterPro"/>
</dbReference>
<dbReference type="GO" id="GO:0044877">
    <property type="term" value="F:protein-containing complex binding"/>
    <property type="evidence" value="ECO:0000250"/>
    <property type="project" value="UniProtKB"/>
</dbReference>
<dbReference type="GO" id="GO:0006338">
    <property type="term" value="P:chromatin remodeling"/>
    <property type="evidence" value="ECO:0000250"/>
    <property type="project" value="UniProtKB"/>
</dbReference>
<dbReference type="GO" id="GO:0051276">
    <property type="term" value="P:chromosome organization"/>
    <property type="evidence" value="ECO:0000250"/>
    <property type="project" value="UniProtKB"/>
</dbReference>
<dbReference type="GO" id="GO:0006974">
    <property type="term" value="P:DNA damage response"/>
    <property type="evidence" value="ECO:0000250"/>
    <property type="project" value="UniProtKB"/>
</dbReference>
<dbReference type="GO" id="GO:0000082">
    <property type="term" value="P:G1/S transition of mitotic cell cycle"/>
    <property type="evidence" value="ECO:0000250"/>
    <property type="project" value="UniProtKB"/>
</dbReference>
<dbReference type="GO" id="GO:0006879">
    <property type="term" value="P:intracellular iron ion homeostasis"/>
    <property type="evidence" value="ECO:0000250"/>
    <property type="project" value="UniProtKB"/>
</dbReference>
<dbReference type="GO" id="GO:0000165">
    <property type="term" value="P:MAPK cascade"/>
    <property type="evidence" value="ECO:0000250"/>
    <property type="project" value="UniProtKB"/>
</dbReference>
<dbReference type="GO" id="GO:0043066">
    <property type="term" value="P:negative regulation of apoptotic process"/>
    <property type="evidence" value="ECO:0000250"/>
    <property type="project" value="UniProtKB"/>
</dbReference>
<dbReference type="GO" id="GO:0051782">
    <property type="term" value="P:negative regulation of cell division"/>
    <property type="evidence" value="ECO:0000250"/>
    <property type="project" value="UniProtKB"/>
</dbReference>
<dbReference type="GO" id="GO:0045656">
    <property type="term" value="P:negative regulation of monocyte differentiation"/>
    <property type="evidence" value="ECO:0000250"/>
    <property type="project" value="UniProtKB"/>
</dbReference>
<dbReference type="GO" id="GO:0032873">
    <property type="term" value="P:negative regulation of stress-activated MAPK cascade"/>
    <property type="evidence" value="ECO:0000250"/>
    <property type="project" value="UniProtKB"/>
</dbReference>
<dbReference type="GO" id="GO:0045893">
    <property type="term" value="P:positive regulation of DNA-templated transcription"/>
    <property type="evidence" value="ECO:0000250"/>
    <property type="project" value="UniProtKB"/>
</dbReference>
<dbReference type="GO" id="GO:0050679">
    <property type="term" value="P:positive regulation of epithelial cell proliferation"/>
    <property type="evidence" value="ECO:0000250"/>
    <property type="project" value="UniProtKB"/>
</dbReference>
<dbReference type="GO" id="GO:0048146">
    <property type="term" value="P:positive regulation of fibroblast proliferation"/>
    <property type="evidence" value="ECO:0000250"/>
    <property type="project" value="UniProtKB"/>
</dbReference>
<dbReference type="GO" id="GO:0045944">
    <property type="term" value="P:positive regulation of transcription by RNA polymerase II"/>
    <property type="evidence" value="ECO:0000250"/>
    <property type="project" value="UniProtKB"/>
</dbReference>
<dbReference type="GO" id="GO:0006355">
    <property type="term" value="P:regulation of DNA-templated transcription"/>
    <property type="evidence" value="ECO:0000250"/>
    <property type="project" value="UniProtKB"/>
</dbReference>
<dbReference type="GO" id="GO:1904672">
    <property type="term" value="P:regulation of somatic stem cell population maintenance"/>
    <property type="evidence" value="ECO:0000250"/>
    <property type="project" value="UniProtKB"/>
</dbReference>
<dbReference type="GO" id="GO:0032204">
    <property type="term" value="P:regulation of telomere maintenance"/>
    <property type="evidence" value="ECO:0000250"/>
    <property type="project" value="UniProtKB"/>
</dbReference>
<dbReference type="GO" id="GO:0009410">
    <property type="term" value="P:response to xenobiotic stimulus"/>
    <property type="evidence" value="ECO:0000250"/>
    <property type="project" value="UniProtKB"/>
</dbReference>
<dbReference type="GO" id="GO:0016072">
    <property type="term" value="P:rRNA metabolic process"/>
    <property type="evidence" value="ECO:0000250"/>
    <property type="project" value="UniProtKB"/>
</dbReference>
<dbReference type="CDD" id="cd11458">
    <property type="entry name" value="bHLHzip_c-Myc"/>
    <property type="match status" value="1"/>
</dbReference>
<dbReference type="FunFam" id="4.10.280.10:FF:000019">
    <property type="entry name" value="Myc proto-oncogene protein"/>
    <property type="match status" value="1"/>
</dbReference>
<dbReference type="Gene3D" id="4.10.280.10">
    <property type="entry name" value="Helix-loop-helix DNA-binding domain"/>
    <property type="match status" value="1"/>
</dbReference>
<dbReference type="InterPro" id="IPR011598">
    <property type="entry name" value="bHLH_dom"/>
</dbReference>
<dbReference type="InterPro" id="IPR036638">
    <property type="entry name" value="HLH_DNA-bd_sf"/>
</dbReference>
<dbReference type="InterPro" id="IPR003327">
    <property type="entry name" value="Myc-LZ"/>
</dbReference>
<dbReference type="InterPro" id="IPR050433">
    <property type="entry name" value="Myc_transcription_factors"/>
</dbReference>
<dbReference type="InterPro" id="IPR002418">
    <property type="entry name" value="Tscrpt_reg_Myc"/>
</dbReference>
<dbReference type="InterPro" id="IPR012682">
    <property type="entry name" value="Tscrpt_reg_Myc_N"/>
</dbReference>
<dbReference type="PANTHER" id="PTHR45851">
    <property type="entry name" value="MYC PROTO-ONCOGENE"/>
    <property type="match status" value="1"/>
</dbReference>
<dbReference type="Pfam" id="PF00010">
    <property type="entry name" value="HLH"/>
    <property type="match status" value="1"/>
</dbReference>
<dbReference type="Pfam" id="PF02344">
    <property type="entry name" value="Myc-LZ"/>
    <property type="match status" value="1"/>
</dbReference>
<dbReference type="Pfam" id="PF01056">
    <property type="entry name" value="Myc_N"/>
    <property type="match status" value="1"/>
</dbReference>
<dbReference type="PIRSF" id="PIRSF001705">
    <property type="entry name" value="Myc_protein"/>
    <property type="match status" value="1"/>
</dbReference>
<dbReference type="PRINTS" id="PR00044">
    <property type="entry name" value="LEUZIPPRMYC"/>
</dbReference>
<dbReference type="SMART" id="SM00353">
    <property type="entry name" value="HLH"/>
    <property type="match status" value="1"/>
</dbReference>
<dbReference type="SUPFAM" id="SSF47459">
    <property type="entry name" value="HLH, helix-loop-helix DNA-binding domain"/>
    <property type="match status" value="1"/>
</dbReference>
<dbReference type="PROSITE" id="PS50888">
    <property type="entry name" value="BHLH"/>
    <property type="match status" value="1"/>
</dbReference>
<organism>
    <name type="scientific">Callithrix jacchus</name>
    <name type="common">White-tufted-ear marmoset</name>
    <dbReference type="NCBI Taxonomy" id="9483"/>
    <lineage>
        <taxon>Eukaryota</taxon>
        <taxon>Metazoa</taxon>
        <taxon>Chordata</taxon>
        <taxon>Craniata</taxon>
        <taxon>Vertebrata</taxon>
        <taxon>Euteleostomi</taxon>
        <taxon>Mammalia</taxon>
        <taxon>Eutheria</taxon>
        <taxon>Euarchontoglires</taxon>
        <taxon>Primates</taxon>
        <taxon>Haplorrhini</taxon>
        <taxon>Platyrrhini</taxon>
        <taxon>Cebidae</taxon>
        <taxon>Callitrichinae</taxon>
        <taxon>Callithrix</taxon>
        <taxon>Callithrix</taxon>
    </lineage>
</organism>
<reference key="1">
    <citation type="journal article" date="1992" name="Gene">
        <title>Gibbon and marmoset c-myc nucleotide sequences.</title>
        <authorList>
            <person name="Eladari M.E."/>
            <person name="Mohammad-Ali K."/>
            <person name="Argaut C."/>
            <person name="Galibert F."/>
        </authorList>
    </citation>
    <scope>NUCLEOTIDE SEQUENCE [GENOMIC DNA]</scope>
</reference>
<proteinExistence type="inferred from homology"/>
<comment type="function">
    <text evidence="2 3">Transcription factor that binds DNA in a non-specific manner, yet also specifically recognizes the core sequence 5'-CAC[GA]TG-3'. Activates the transcription of growth-related genes. Binds to the VEGFA promoter, promoting VEGFA production and subsequent sprouting angiogenesis. Regulator of somatic reprogramming, controls self-renewal of embryonic stem cells. Functions with TAF6L to activate target gene expression through RNA polymerase II pause release (By similarity). Positively regulates transcription of HNRNPA1, HNRNPA2 and PTBP1 which in turn regulate splicing of pyruvate kinase PKM by binding repressively to sequences flanking PKM exon 9, inhibiting exon 9 inclusion and resulting in exon 10 inclusion and production of the PKM M2 isoform (By similarity).</text>
</comment>
<comment type="subunit">
    <text evidence="2 3">Efficient DNA binding requires dimerization with another bHLH protein. Binds DNA as a heterodimer with MAX (By similarity). Interacts with TAF1C and SPAG9. Interacts with PARP10. Interacts with KDM5A and KDM5B. Interacts (when phosphorylated at Thr-58 and Ser-62) with FBXW7. Interacts with PIM2. Interacts with RIOX1. The heterodimer MYC:MAX interacts with ABI1; the interaction may enhance MYC:MAX transcriptional activity. Interacts with TRIM6 (By similarity). Interacts with NPM1; the binary complex is recruited to the promoter of MYC target genes and enhances their transcription (By similarity). Interacts with NUP205 (By similarity). Interacts with HEATR1; the interaction is required for localization of MYC to the nucleolus (By similarity).</text>
</comment>
<comment type="subcellular location">
    <subcellularLocation>
        <location evidence="2">Nucleus</location>
        <location evidence="2">Nucleoplasm</location>
    </subcellularLocation>
    <subcellularLocation>
        <location evidence="2">Nucleus</location>
        <location evidence="2">Nucleolus</location>
    </subcellularLocation>
    <subcellularLocation>
        <location evidence="2">Nucleus</location>
    </subcellularLocation>
    <subcellularLocation>
        <location evidence="2">Cytoplasm</location>
    </subcellularLocation>
    <subcellularLocation>
        <location evidence="2">Chromosome</location>
    </subcellularLocation>
    <text evidence="2">Association with chromatin is reduced by hyperphosphorylation. Localization to the nucleolus is dependent on HEATR1.</text>
</comment>
<comment type="domain">
    <text evidence="2">The 9aaTAD motif is a transactivation domain present in a large number of yeast and animal transcription factors.</text>
</comment>
<comment type="PTM">
    <text evidence="2 3">Phosphorylated by PRKDC (By similarity). Phosphorylation at Ser-328 by PIM2 leads to the stabilization of MYC (By similarity). Phosphorylation at Ser-62 by CDK2 prevents Ras-induced senescence. Phosphorylated at Ser-62 by DYRK2; this primes the protein for subsequent phosphorylation by GSK3B at Thr-58. Phosphorylation at Thr-58 and Ser-62 by GSK3 is required for ubiquitination and degradation by the proteasome. Dephosphorylation at multiple sites by the PNUTS-PP1 complex promotes MYC stability by preventing ubiquitination by the SCF(FBXW7) complex. Dephosphorylation at Ser-62 by protein phosphatase 2A (PPP2CA) promotes its degradation; interaction with PPP2CA is enhanced by AMBRA1 (By similarity).</text>
</comment>
<comment type="PTM">
    <text evidence="2 3">Ubiquitinated by the SCF(FBXW7) complex when phosphorylated at Thr-58 and Ser-62, leading to its degradation by the proteasome. Ubiquitination is counteracted by USP28 in the nucleoplasm and USP36 in the nucleolus, both interacting with of FBXW7, leading to its deubiquitination and preventing degradation. Also polyubiquitinated by the DCX(TRPC4AP) complex. Ubiquitinated by UBR5 when not forming a heterodimer with another bHLH protein, leading to its degradation: UBR5 recognizes and binds a degron that is only available upon heterodimer dissociation (By similarity). Ubiquitinated by TRIM6 in a phosphorylation-independent manner.</text>
</comment>